<name>THADA_DROME</name>
<protein>
    <recommendedName>
        <fullName evidence="6">tRNA (32-2'-O)-methyltransferase regulator THADA</fullName>
    </recommendedName>
    <alternativeName>
        <fullName evidence="5">Thyroid adenoma-associated protein homolog</fullName>
    </alternativeName>
</protein>
<sequence length="1746" mass="197353">MNDLNLRVAALKVCAHPKRFAELRDALVPLPNTWIAAPHDFVLQFAAAKSSAEQVQVVKDVFYGEQAQDHEDVAHFLADLLLASPLKHAVRNQLTKLFSDNALAKQNASPHRRHSKEHLLEALQQSLGEMANSLAVITPPVSHERTNDVFVSANACLQNFPFGREALGKQVHRFAPLLTTALERYWADICDPTLELSPTRRNELYLYVQNALRFLVSLLAEWSDKLRLFEDQRFPGTSNAVAQKVARYYDTPWDVRSIAALLIGHLARFSGTFKAYVEDCSRPKAEQDVPIQMAALLVLRPVDYTENATLALAILKRIVAVSELKSTVTNLLVFLSKHLFIYSKSLGEMHAHLPDDQKLLYQRILAQLQVFALQNISSDTDSVRHMSSALLHQVLQHAQAAGQEELFQVVYRQFEDRAAYLNASCMALEQLVAVAGVSKSIENCPSLFGVIFPRHLGCEDCVDALFKAMMVSAHKTEPFAEWQSRWFGLLLAAIRVPEKRRQVIEELIAQAVQLEPTRLAQVLLPDDRLPLSCKLAAILGVRQLSARRQNLLRGMKEEVEQALIGLDDHTRLLALRFLVETPRPSELLNADQMGAIELYVRHNANNPSAHLRQLGYGLLQKALKRVHFGLVEYRKSRTPASQEVLQFLIRLIRTLAQNLFPTANYGRRWLSLRLLRDCLELSEMVGITFSELGIELPTEALMACLGDSYEHNKVLAAQLLERFQSHSLFKPDEMIELLLSLRPSDSATGAFQLQVYCKASRVQSEMPTPTHGGTIHEPLTFRALQWCLQHLREGLRLAQLDLGEAAKLNPLYGLLFASRHLLQQLKLKELAKEPQWRQYIDELVTMCLAVSSVVLPVVSSASPEGHLPETCDQETDQPLTNVLDRQLSREELLQVRTTPQMILLCAWRSSKEVCLILGELVQRAPLEEEEDEEQQQQQGDFLLSRAQLEAIGEHFLQLLAETKHRGAFEQAYVGFTMLCRRFWHSESVRLNQLPGQWVDEAMAMVSGQEEWAGKGARLCATRRSAGMPFMLQALVGTELKLGTHATLYRCMNRLLEVCERRTGGAAGITARSHALNIMRALFRSSELAELVTEFMARGIQCALDGLLLAEEWAERNSATLLLAALIVRVFGVERARLETGELHVRNRMTGRIFFTRYPQLFDYFHAALQRESEQMDAGGGGSENASGKRRQAVQLEAMLLMLSRLYPSSLEGAESTLNLSEFVPFLIRICHSHDLMTREMAALVVANFVTQEQALAEIRRIVVELKALQLRLKNTEAANTKLNTNVLHGQLLLLLHLHRLVRWTRPSLTRMQLHTLAELAAPLLQHDACAFSALVAVMVAAMEDAVEPGLLDFQLLEQIGVVYLLNHKEVQSRCQQLGISNRFYQIFGLHLHRLRGISQGIVLHIVEDLAETIWALDELKVELWLYILLQRSLSEQNSLVSEQDIEHFEFSRDIRRYFETLSREQREEVGQELYESPAVRSSVLHMMHMIKSSKNSCWSLQLAGRLAALQTLLRDPGLELNQLVQRCSEEHSTHQEAGLLLGLRRLIGESKMLERKHWLPMLNYAQRLVHPGQPVYLRHQAAELCDSLARNHLRDQLVAGTTDVDIGLVGRFSGLVLLLLHDDAEWVRHRAVQLVCGAGLRTRSGAGQEQEQSAMAPLILPSALIPPFLDTMIGKLTFDDFNMVQRLVDIIAEPFTTADAMELFDKQENNHYCERNHVLTELWDARGRADPRARTPTIPTGYQIFK</sequence>
<reference evidence="9" key="1">
    <citation type="journal article" date="2000" name="Science">
        <title>The genome sequence of Drosophila melanogaster.</title>
        <authorList>
            <person name="Adams M.D."/>
            <person name="Celniker S.E."/>
            <person name="Holt R.A."/>
            <person name="Evans C.A."/>
            <person name="Gocayne J.D."/>
            <person name="Amanatides P.G."/>
            <person name="Scherer S.E."/>
            <person name="Li P.W."/>
            <person name="Hoskins R.A."/>
            <person name="Galle R.F."/>
            <person name="George R.A."/>
            <person name="Lewis S.E."/>
            <person name="Richards S."/>
            <person name="Ashburner M."/>
            <person name="Henderson S.N."/>
            <person name="Sutton G.G."/>
            <person name="Wortman J.R."/>
            <person name="Yandell M.D."/>
            <person name="Zhang Q."/>
            <person name="Chen L.X."/>
            <person name="Brandon R.C."/>
            <person name="Rogers Y.-H.C."/>
            <person name="Blazej R.G."/>
            <person name="Champe M."/>
            <person name="Pfeiffer B.D."/>
            <person name="Wan K.H."/>
            <person name="Doyle C."/>
            <person name="Baxter E.G."/>
            <person name="Helt G."/>
            <person name="Nelson C.R."/>
            <person name="Miklos G.L.G."/>
            <person name="Abril J.F."/>
            <person name="Agbayani A."/>
            <person name="An H.-J."/>
            <person name="Andrews-Pfannkoch C."/>
            <person name="Baldwin D."/>
            <person name="Ballew R.M."/>
            <person name="Basu A."/>
            <person name="Baxendale J."/>
            <person name="Bayraktaroglu L."/>
            <person name="Beasley E.M."/>
            <person name="Beeson K.Y."/>
            <person name="Benos P.V."/>
            <person name="Berman B.P."/>
            <person name="Bhandari D."/>
            <person name="Bolshakov S."/>
            <person name="Borkova D."/>
            <person name="Botchan M.R."/>
            <person name="Bouck J."/>
            <person name="Brokstein P."/>
            <person name="Brottier P."/>
            <person name="Burtis K.C."/>
            <person name="Busam D.A."/>
            <person name="Butler H."/>
            <person name="Cadieu E."/>
            <person name="Center A."/>
            <person name="Chandra I."/>
            <person name="Cherry J.M."/>
            <person name="Cawley S."/>
            <person name="Dahlke C."/>
            <person name="Davenport L.B."/>
            <person name="Davies P."/>
            <person name="de Pablos B."/>
            <person name="Delcher A."/>
            <person name="Deng Z."/>
            <person name="Mays A.D."/>
            <person name="Dew I."/>
            <person name="Dietz S.M."/>
            <person name="Dodson K."/>
            <person name="Doup L.E."/>
            <person name="Downes M."/>
            <person name="Dugan-Rocha S."/>
            <person name="Dunkov B.C."/>
            <person name="Dunn P."/>
            <person name="Durbin K.J."/>
            <person name="Evangelista C.C."/>
            <person name="Ferraz C."/>
            <person name="Ferriera S."/>
            <person name="Fleischmann W."/>
            <person name="Fosler C."/>
            <person name="Gabrielian A.E."/>
            <person name="Garg N.S."/>
            <person name="Gelbart W.M."/>
            <person name="Glasser K."/>
            <person name="Glodek A."/>
            <person name="Gong F."/>
            <person name="Gorrell J.H."/>
            <person name="Gu Z."/>
            <person name="Guan P."/>
            <person name="Harris M."/>
            <person name="Harris N.L."/>
            <person name="Harvey D.A."/>
            <person name="Heiman T.J."/>
            <person name="Hernandez J.R."/>
            <person name="Houck J."/>
            <person name="Hostin D."/>
            <person name="Houston K.A."/>
            <person name="Howland T.J."/>
            <person name="Wei M.-H."/>
            <person name="Ibegwam C."/>
            <person name="Jalali M."/>
            <person name="Kalush F."/>
            <person name="Karpen G.H."/>
            <person name="Ke Z."/>
            <person name="Kennison J.A."/>
            <person name="Ketchum K.A."/>
            <person name="Kimmel B.E."/>
            <person name="Kodira C.D."/>
            <person name="Kraft C.L."/>
            <person name="Kravitz S."/>
            <person name="Kulp D."/>
            <person name="Lai Z."/>
            <person name="Lasko P."/>
            <person name="Lei Y."/>
            <person name="Levitsky A.A."/>
            <person name="Li J.H."/>
            <person name="Li Z."/>
            <person name="Liang Y."/>
            <person name="Lin X."/>
            <person name="Liu X."/>
            <person name="Mattei B."/>
            <person name="McIntosh T.C."/>
            <person name="McLeod M.P."/>
            <person name="McPherson D."/>
            <person name="Merkulov G."/>
            <person name="Milshina N.V."/>
            <person name="Mobarry C."/>
            <person name="Morris J."/>
            <person name="Moshrefi A."/>
            <person name="Mount S.M."/>
            <person name="Moy M."/>
            <person name="Murphy B."/>
            <person name="Murphy L."/>
            <person name="Muzny D.M."/>
            <person name="Nelson D.L."/>
            <person name="Nelson D.R."/>
            <person name="Nelson K.A."/>
            <person name="Nixon K."/>
            <person name="Nusskern D.R."/>
            <person name="Pacleb J.M."/>
            <person name="Palazzolo M."/>
            <person name="Pittman G.S."/>
            <person name="Pan S."/>
            <person name="Pollard J."/>
            <person name="Puri V."/>
            <person name="Reese M.G."/>
            <person name="Reinert K."/>
            <person name="Remington K."/>
            <person name="Saunders R.D.C."/>
            <person name="Scheeler F."/>
            <person name="Shen H."/>
            <person name="Shue B.C."/>
            <person name="Siden-Kiamos I."/>
            <person name="Simpson M."/>
            <person name="Skupski M.P."/>
            <person name="Smith T.J."/>
            <person name="Spier E."/>
            <person name="Spradling A.C."/>
            <person name="Stapleton M."/>
            <person name="Strong R."/>
            <person name="Sun E."/>
            <person name="Svirskas R."/>
            <person name="Tector C."/>
            <person name="Turner R."/>
            <person name="Venter E."/>
            <person name="Wang A.H."/>
            <person name="Wang X."/>
            <person name="Wang Z.-Y."/>
            <person name="Wassarman D.A."/>
            <person name="Weinstock G.M."/>
            <person name="Weissenbach J."/>
            <person name="Williams S.M."/>
            <person name="Woodage T."/>
            <person name="Worley K.C."/>
            <person name="Wu D."/>
            <person name="Yang S."/>
            <person name="Yao Q.A."/>
            <person name="Ye J."/>
            <person name="Yeh R.-F."/>
            <person name="Zaveri J.S."/>
            <person name="Zhan M."/>
            <person name="Zhang G."/>
            <person name="Zhao Q."/>
            <person name="Zheng L."/>
            <person name="Zheng X.H."/>
            <person name="Zhong F.N."/>
            <person name="Zhong W."/>
            <person name="Zhou X."/>
            <person name="Zhu S.C."/>
            <person name="Zhu X."/>
            <person name="Smith H.O."/>
            <person name="Gibbs R.A."/>
            <person name="Myers E.W."/>
            <person name="Rubin G.M."/>
            <person name="Venter J.C."/>
        </authorList>
    </citation>
    <scope>NUCLEOTIDE SEQUENCE [LARGE SCALE GENOMIC DNA]</scope>
    <source>
        <strain evidence="9">Berkeley</strain>
    </source>
</reference>
<reference evidence="9" key="2">
    <citation type="journal article" date="2002" name="Genome Biol.">
        <title>Annotation of the Drosophila melanogaster euchromatic genome: a systematic review.</title>
        <authorList>
            <person name="Misra S."/>
            <person name="Crosby M.A."/>
            <person name="Mungall C.J."/>
            <person name="Matthews B.B."/>
            <person name="Campbell K.S."/>
            <person name="Hradecky P."/>
            <person name="Huang Y."/>
            <person name="Kaminker J.S."/>
            <person name="Millburn G.H."/>
            <person name="Prochnik S.E."/>
            <person name="Smith C.D."/>
            <person name="Tupy J.L."/>
            <person name="Whitfield E.J."/>
            <person name="Bayraktaroglu L."/>
            <person name="Berman B.P."/>
            <person name="Bettencourt B.R."/>
            <person name="Celniker S.E."/>
            <person name="de Grey A.D.N.J."/>
            <person name="Drysdale R.A."/>
            <person name="Harris N.L."/>
            <person name="Richter J."/>
            <person name="Russo S."/>
            <person name="Schroeder A.J."/>
            <person name="Shu S.Q."/>
            <person name="Stapleton M."/>
            <person name="Yamada C."/>
            <person name="Ashburner M."/>
            <person name="Gelbart W.M."/>
            <person name="Rubin G.M."/>
            <person name="Lewis S.E."/>
        </authorList>
    </citation>
    <scope>GENOME REANNOTATION</scope>
    <source>
        <strain evidence="9">Berkeley</strain>
    </source>
</reference>
<reference evidence="7" key="3">
    <citation type="submission" date="2002-07" db="EMBL/GenBank/DDBJ databases">
        <authorList>
            <person name="Stapleton M."/>
            <person name="Brokstein P."/>
            <person name="Hong L."/>
            <person name="Agbayani A."/>
            <person name="Carlson J."/>
            <person name="Champe M."/>
            <person name="Chavez C."/>
            <person name="Dorsett V."/>
            <person name="Dresnek D."/>
            <person name="Farfan D."/>
            <person name="Frise E."/>
            <person name="George R."/>
            <person name="Gonzalez M."/>
            <person name="Guarin H."/>
            <person name="Kronmiller B."/>
            <person name="Li P."/>
            <person name="Liao G."/>
            <person name="Miranda A."/>
            <person name="Mungall C.J."/>
            <person name="Nunoo J."/>
            <person name="Pacleb J."/>
            <person name="Paragas V."/>
            <person name="Park S."/>
            <person name="Patel S."/>
            <person name="Phouanenavong S."/>
            <person name="Wan K."/>
            <person name="Yu C."/>
            <person name="Lewis S.E."/>
            <person name="Rubin G.M."/>
            <person name="Celniker S."/>
        </authorList>
    </citation>
    <scope>NUCLEOTIDE SEQUENCE [LARGE SCALE MRNA]</scope>
    <source>
        <strain evidence="7">Berkeley</strain>
        <tissue evidence="7">Embryo</tissue>
    </source>
</reference>
<reference evidence="6" key="4">
    <citation type="journal article" date="2017" name="Dev. Cell">
        <title>THADA regulates the organismal balance between energy storage and heat production.</title>
        <authorList>
            <person name="Moraru A."/>
            <person name="Cakan-Akdogan G."/>
            <person name="Strassburger K."/>
            <person name="Males M."/>
            <person name="Mueller S."/>
            <person name="Jabs M."/>
            <person name="Muelleder M."/>
            <person name="Frejno M."/>
            <person name="Braeckman B.P."/>
            <person name="Ralser M."/>
            <person name="Teleman A.A."/>
        </authorList>
    </citation>
    <scope>FUNCTION</scope>
    <scope>INTERACTION WITH SERCA</scope>
    <scope>SUBCELLULAR LOCATION</scope>
    <scope>TISSUE SPECIFICITY</scope>
    <scope>DISRUPTION PHENOTYPE</scope>
</reference>
<reference key="5">
    <citation type="journal article" date="2017" name="Dev. Cell">
        <authorList>
            <person name="Moraru A."/>
            <person name="Cakan-Akdogan G."/>
            <person name="Strassburger K."/>
            <person name="Males M."/>
            <person name="Mueller S."/>
            <person name="Jabs M."/>
            <person name="Muelleder M."/>
            <person name="Frejno M."/>
            <person name="Braeckman B.P."/>
            <person name="Ralser M."/>
            <person name="Teleman A.A."/>
        </authorList>
    </citation>
    <scope>ERRATUM OF PUBMED:28399403</scope>
</reference>
<reference key="6">
    <citation type="journal article" date="2020" name="Nucleic Acids Res.">
        <title>tRNA 2'-O-methylation by a duo of TRM7/FTSJ1 proteins modulates small RNA silencing in Drosophila.</title>
        <authorList>
            <person name="Angelova M.T."/>
            <person name="Dimitrova D.G."/>
            <person name="Da Silva B."/>
            <person name="Marchand V."/>
            <person name="Jacquier C."/>
            <person name="Achour C."/>
            <person name="Brazane M."/>
            <person name="Goyenvalle C."/>
            <person name="Bourguignon-Igel V."/>
            <person name="Shehzada S."/>
            <person name="Khouider S."/>
            <person name="Lence T."/>
            <person name="Guerineau V."/>
            <person name="Roignant J.Y."/>
            <person name="Antoniewski C."/>
            <person name="Teysset L."/>
            <person name="Bregeon D."/>
            <person name="Motorin Y."/>
            <person name="Schaefer M.R."/>
            <person name="Carre C."/>
        </authorList>
    </citation>
    <scope>DISRUPTION PHENOTYPE</scope>
</reference>
<evidence type="ECO:0000250" key="1">
    <source>
        <dbReference type="UniProtKB" id="Q6YHU6"/>
    </source>
</evidence>
<evidence type="ECO:0000255" key="2"/>
<evidence type="ECO:0000269" key="3">
    <source>
    </source>
</evidence>
<evidence type="ECO:0000269" key="4">
    <source>
    </source>
</evidence>
<evidence type="ECO:0000303" key="5">
    <source>
    </source>
</evidence>
<evidence type="ECO:0000305" key="6"/>
<evidence type="ECO:0000312" key="7">
    <source>
        <dbReference type="EMBL" id="AAM75097.1"/>
    </source>
</evidence>
<evidence type="ECO:0000312" key="8">
    <source>
        <dbReference type="FlyBase" id="FBgn0031077"/>
    </source>
</evidence>
<evidence type="ECO:0000312" key="9">
    <source>
        <dbReference type="Proteomes" id="UP000000803"/>
    </source>
</evidence>
<accession>Q9VWB9</accession>
<accession>Q8MQL6</accession>
<dbReference type="EMBL" id="AE014298">
    <property type="protein sequence ID" value="AAF49027.3"/>
    <property type="molecule type" value="Genomic_DNA"/>
</dbReference>
<dbReference type="EMBL" id="AY128504">
    <property type="protein sequence ID" value="AAM75097.1"/>
    <property type="status" value="ALT_FRAME"/>
    <property type="molecule type" value="mRNA"/>
</dbReference>
<dbReference type="RefSeq" id="NP_608361.3">
    <property type="nucleotide sequence ID" value="NM_134517.3"/>
</dbReference>
<dbReference type="FunCoup" id="Q9VWB9">
    <property type="interactions" value="32"/>
</dbReference>
<dbReference type="IntAct" id="Q9VWB9">
    <property type="interactions" value="2"/>
</dbReference>
<dbReference type="STRING" id="7227.FBpp0288416"/>
<dbReference type="PaxDb" id="7227-FBpp0288416"/>
<dbReference type="EnsemblMetazoa" id="FBtr0289978">
    <property type="protein sequence ID" value="FBpp0288416"/>
    <property type="gene ID" value="FBgn0031077"/>
</dbReference>
<dbReference type="GeneID" id="33001"/>
<dbReference type="KEGG" id="dme:Dmel_CG15618"/>
<dbReference type="UCSC" id="CG15618-RB">
    <property type="organism name" value="d. melanogaster"/>
</dbReference>
<dbReference type="AGR" id="FB:FBgn0031077"/>
<dbReference type="CTD" id="63892"/>
<dbReference type="FlyBase" id="FBgn0031077">
    <property type="gene designation" value="THADA"/>
</dbReference>
<dbReference type="VEuPathDB" id="VectorBase:FBgn0031077"/>
<dbReference type="eggNOG" id="KOG1810">
    <property type="taxonomic scope" value="Eukaryota"/>
</dbReference>
<dbReference type="GeneTree" id="ENSGT00390000015500"/>
<dbReference type="HOGENOM" id="CLU_240100_0_0_1"/>
<dbReference type="InParanoid" id="Q9VWB9"/>
<dbReference type="OMA" id="VDTPWDV"/>
<dbReference type="OrthoDB" id="73997at2759"/>
<dbReference type="PhylomeDB" id="Q9VWB9"/>
<dbReference type="BioGRID-ORCS" id="33001">
    <property type="hits" value="0 hits in 1 CRISPR screen"/>
</dbReference>
<dbReference type="GenomeRNAi" id="33001"/>
<dbReference type="PRO" id="PR:Q9VWB9"/>
<dbReference type="Proteomes" id="UP000000803">
    <property type="component" value="Chromosome X"/>
</dbReference>
<dbReference type="Bgee" id="FBgn0031077">
    <property type="expression patterns" value="Expressed in adult differentiating enterocyte in digestive tract and 26 other cell types or tissues"/>
</dbReference>
<dbReference type="ExpressionAtlas" id="Q9VWB9">
    <property type="expression patterns" value="baseline and differential"/>
</dbReference>
<dbReference type="GO" id="GO:0098554">
    <property type="term" value="C:cytoplasmic side of endoplasmic reticulum membrane"/>
    <property type="evidence" value="ECO:0000314"/>
    <property type="project" value="FlyBase"/>
</dbReference>
<dbReference type="GO" id="GO:0019855">
    <property type="term" value="F:calcium channel inhibitor activity"/>
    <property type="evidence" value="ECO:0000314"/>
    <property type="project" value="FlyBase"/>
</dbReference>
<dbReference type="GO" id="GO:1990845">
    <property type="term" value="P:adaptive thermogenesis"/>
    <property type="evidence" value="ECO:0000315"/>
    <property type="project" value="FlyBase"/>
</dbReference>
<dbReference type="GO" id="GO:0032471">
    <property type="term" value="P:negative regulation of endoplasmic reticulum calcium ion concentration"/>
    <property type="evidence" value="ECO:0000314"/>
    <property type="project" value="FlyBase"/>
</dbReference>
<dbReference type="GO" id="GO:0010888">
    <property type="term" value="P:negative regulation of lipid storage"/>
    <property type="evidence" value="ECO:0000315"/>
    <property type="project" value="FlyBase"/>
</dbReference>
<dbReference type="GO" id="GO:0030488">
    <property type="term" value="P:tRNA methylation"/>
    <property type="evidence" value="ECO:0000318"/>
    <property type="project" value="GO_Central"/>
</dbReference>
<dbReference type="GO" id="GO:0002128">
    <property type="term" value="P:tRNA nucleoside ribose methylation"/>
    <property type="evidence" value="ECO:0000250"/>
    <property type="project" value="UniProtKB"/>
</dbReference>
<dbReference type="InterPro" id="IPR016024">
    <property type="entry name" value="ARM-type_fold"/>
</dbReference>
<dbReference type="InterPro" id="IPR056843">
    <property type="entry name" value="THADA-like_TPR"/>
</dbReference>
<dbReference type="InterPro" id="IPR056842">
    <property type="entry name" value="THADA-like_TPR_C"/>
</dbReference>
<dbReference type="InterPro" id="IPR019442">
    <property type="entry name" value="THADA/TRM732_DUF2428"/>
</dbReference>
<dbReference type="InterPro" id="IPR051954">
    <property type="entry name" value="tRNA_methyltransferase_THADA"/>
</dbReference>
<dbReference type="PANTHER" id="PTHR14387">
    <property type="entry name" value="THADA/DEATH RECEPTOR INTERACTING PROTEIN"/>
    <property type="match status" value="1"/>
</dbReference>
<dbReference type="PANTHER" id="PTHR14387:SF7">
    <property type="entry name" value="THYROID ADENOMA-ASSOCIATED PROTEIN"/>
    <property type="match status" value="1"/>
</dbReference>
<dbReference type="Pfam" id="PF10350">
    <property type="entry name" value="DUF2428"/>
    <property type="match status" value="1"/>
</dbReference>
<dbReference type="Pfam" id="PF25150">
    <property type="entry name" value="TPR_Trm732"/>
    <property type="match status" value="1"/>
</dbReference>
<dbReference type="Pfam" id="PF25151">
    <property type="entry name" value="TPR_Trm732_C"/>
    <property type="match status" value="1"/>
</dbReference>
<dbReference type="SUPFAM" id="SSF48371">
    <property type="entry name" value="ARM repeat"/>
    <property type="match status" value="3"/>
</dbReference>
<organism evidence="9">
    <name type="scientific">Drosophila melanogaster</name>
    <name type="common">Fruit fly</name>
    <dbReference type="NCBI Taxonomy" id="7227"/>
    <lineage>
        <taxon>Eukaryota</taxon>
        <taxon>Metazoa</taxon>
        <taxon>Ecdysozoa</taxon>
        <taxon>Arthropoda</taxon>
        <taxon>Hexapoda</taxon>
        <taxon>Insecta</taxon>
        <taxon>Pterygota</taxon>
        <taxon>Neoptera</taxon>
        <taxon>Endopterygota</taxon>
        <taxon>Diptera</taxon>
        <taxon>Brachycera</taxon>
        <taxon>Muscomorpha</taxon>
        <taxon>Ephydroidea</taxon>
        <taxon>Drosophilidae</taxon>
        <taxon>Drosophila</taxon>
        <taxon>Sophophora</taxon>
    </lineage>
</organism>
<feature type="chain" id="PRO_0000441753" description="tRNA (32-2'-O)-methyltransferase regulator THADA">
    <location>
        <begin position="1"/>
        <end position="1746"/>
    </location>
</feature>
<feature type="coiled-coil region" evidence="2">
    <location>
        <begin position="1252"/>
        <end position="1286"/>
    </location>
</feature>
<feature type="sequence conflict" description="In Ref. 3; AAM75097." evidence="6" ref="3">
    <original>Q</original>
    <variation>QQ</variation>
    <location>
        <position position="938"/>
    </location>
</feature>
<feature type="sequence conflict" description="In Ref. 3; AAM75097." evidence="6" ref="3">
    <original>E</original>
    <variation>V</variation>
    <location>
        <position position="1530"/>
    </location>
</feature>
<comment type="function">
    <text evidence="1 3">Together with methyltransferase Trm7-32, methylates the 2'-O-ribose of nucleotides at position 32 of the anticodon loop of substrate tRNAs (By similarity). Plays a key role in energy homeostasis by regulating the balance between energy storage and heat production. Functions by negatively regulating Ca(2+) signaling pathways that are involved in heat production and maintaining correct lipid storage in the fat body. Regulates Ca(2+) signaling pathways by reducing the activity of the calcium-transporting ATPase SERCA possibly by promoting uncoupling of SERCA ATP hydrolysis from calcium pumping. May also function in the nervous system to control feeding behavior (PubMed:28399403).</text>
</comment>
<comment type="subunit">
    <text evidence="3">Interacts with SERCA.</text>
</comment>
<comment type="subcellular location">
    <subcellularLocation>
        <location evidence="3">Endoplasmic reticulum</location>
    </subcellularLocation>
</comment>
<comment type="tissue specificity">
    <text evidence="3">Detected in the larval fat body, salivary glands and wing imaginal disks (at protein level).</text>
</comment>
<comment type="disruption phenotype">
    <text evidence="3 4">Flies are hypersensitive to the cold, hyperphagic and display elevated triglyceride stores resulting in an increased resistance to starvation (PubMed:28399403). Heat production is impaired and flies are slow to recover after cold treatment (PubMed:28399403). The size of the lipid droplets in larval fat bodies are significantly increased and flies display increased feeding (PubMed:28399403). Total body glycogen is also significantly increased in adult females but not in males (PubMed:28399403). Mutants also display an increase in calcium-dependent SERCA activity (PubMed:28399403). No effect on levels of circulating sugars, glucose and trehalose (PubMed:28399403). RNAi-mediated knockdown impairs small interfering RNA-mediated silencing (PubMed:31943105).</text>
</comment>
<comment type="similarity">
    <text evidence="6">Belongs to the THADA family.</text>
</comment>
<comment type="sequence caution" evidence="6">
    <conflict type="frameshift">
        <sequence resource="EMBL-CDS" id="AAM75097"/>
    </conflict>
</comment>
<gene>
    <name evidence="5 8" type="primary">THADA</name>
    <name evidence="8" type="ORF">CG15618</name>
</gene>
<proteinExistence type="evidence at protein level"/>
<keyword id="KW-0175">Coiled coil</keyword>
<keyword id="KW-0256">Endoplasmic reticulum</keyword>
<keyword id="KW-0597">Phosphoprotein</keyword>
<keyword id="KW-1185">Reference proteome</keyword>
<keyword id="KW-0819">tRNA processing</keyword>